<name>CAZA2_MUSPF</name>
<gene>
    <name type="primary">CAPZA2</name>
</gene>
<sequence length="286" mass="32967">MADLDEQLSDEEKVRIAAKFIIHAPPGEFNEVFNDVRLLLNNDNLLREGAAHAFAQYNLDQFTPVKIEGYEDQVLITEHGDLGNGKFLDPKNRICFKFDHLRKEATDPRPYEAENAVESWRTSVETALRAYVKEHYPNGVCTVYGKKIDGQQTIIACIESHQFQAKNFWNGRWRSEWKFTITPSTTQVVGILKIQVHYYEDGNVQLVSHKDIQDSLTVSNEVQTAKEFIKIVEAAENEYQTAISENYQTMSDTTFKALRRQLPVTRTKIDWNKILSYKIGKEMQNA</sequence>
<keyword id="KW-0007">Acetylation</keyword>
<keyword id="KW-0117">Actin capping</keyword>
<keyword id="KW-0009">Actin-binding</keyword>
<keyword id="KW-0597">Phosphoprotein</keyword>
<keyword id="KW-1185">Reference proteome</keyword>
<evidence type="ECO:0000250" key="1"/>
<evidence type="ECO:0000250" key="2">
    <source>
        <dbReference type="UniProtKB" id="P47755"/>
    </source>
</evidence>
<evidence type="ECO:0000305" key="3"/>
<comment type="function">
    <text evidence="1">F-actin-capping proteins bind in a Ca(2+)-independent manner to the fast growing ends of actin filaments (barbed end) thereby blocking the exchange of subunits at these ends. Unlike other capping proteins (such as gelsolin and severin), these proteins do not sever actin filaments (By similarity).</text>
</comment>
<comment type="subunit">
    <text evidence="1 2">Component of the F-actin capping complex, composed of a heterodimer of an alpha and a beta subunit. Component of the WASH complex, composed of F-actin-capping protein subunit alpha (CAPZA1, CAPZA2 or CAPZA3), F-actin-capping protein subunit beta (CAPZB), WASHC1, WASHC2, WASHC3, WASHC4 and WASHC5. Interacts with RCSD1/CAPZIP (By similarity). Directly interacts with CRACD; this interaction decreases binding to actin (By similarity).</text>
</comment>
<comment type="similarity">
    <text evidence="3">Belongs to the F-actin-capping protein alpha subunit family.</text>
</comment>
<protein>
    <recommendedName>
        <fullName>F-actin-capping protein subunit alpha-2</fullName>
    </recommendedName>
    <alternativeName>
        <fullName>CapZ alpha-2</fullName>
    </alternativeName>
</protein>
<reference key="1">
    <citation type="submission" date="2006-09" db="EMBL/GenBank/DDBJ databases">
        <title>NISC comparative sequencing initiative.</title>
        <authorList>
            <person name="Antonellis A."/>
            <person name="Ayele K."/>
            <person name="Benjamin B."/>
            <person name="Blakesley R.W."/>
            <person name="Boakye A."/>
            <person name="Bouffard G.G."/>
            <person name="Brinkley C."/>
            <person name="Brooks S."/>
            <person name="Chu G."/>
            <person name="Coleman H."/>
            <person name="Engle J."/>
            <person name="Gestole M."/>
            <person name="Greene A."/>
            <person name="Guan X."/>
            <person name="Gupta J."/>
            <person name="Haghighi P."/>
            <person name="Han J."/>
            <person name="Hansen N."/>
            <person name="Ho S.-L."/>
            <person name="Hu P."/>
            <person name="Hunter G."/>
            <person name="Hurle B."/>
            <person name="Idol J.R."/>
            <person name="Kwong P."/>
            <person name="Laric P."/>
            <person name="Larson S."/>
            <person name="Lee-Lin S.-Q."/>
            <person name="Legaspi R."/>
            <person name="Madden M."/>
            <person name="Maduro Q.L."/>
            <person name="Maduro V.B."/>
            <person name="Margulies E.H."/>
            <person name="Masiello C."/>
            <person name="Maskeri B."/>
            <person name="McDowell J."/>
            <person name="Mojidi H.A."/>
            <person name="Mullikin J.C."/>
            <person name="Oestreicher J.S."/>
            <person name="Park M."/>
            <person name="Portnoy M.E."/>
            <person name="Prasad A."/>
            <person name="Puri O."/>
            <person name="Reddix-Dugue N."/>
            <person name="Schandler K."/>
            <person name="Schueler M.G."/>
            <person name="Sison C."/>
            <person name="Stantripop S."/>
            <person name="Stephen E."/>
            <person name="Taye A."/>
            <person name="Thomas J.W."/>
            <person name="Thomas P.J."/>
            <person name="Tsipouri V."/>
            <person name="Ung L."/>
            <person name="Vogt J.L."/>
            <person name="Wetherby K.D."/>
            <person name="Young A."/>
            <person name="Green E.D."/>
        </authorList>
    </citation>
    <scope>NUCLEOTIDE SEQUENCE [LARGE SCALE GENOMIC DNA]</scope>
</reference>
<proteinExistence type="inferred from homology"/>
<organism>
    <name type="scientific">Mustela putorius furo</name>
    <name type="common">European domestic ferret</name>
    <name type="synonym">Mustela furo</name>
    <dbReference type="NCBI Taxonomy" id="9669"/>
    <lineage>
        <taxon>Eukaryota</taxon>
        <taxon>Metazoa</taxon>
        <taxon>Chordata</taxon>
        <taxon>Craniata</taxon>
        <taxon>Vertebrata</taxon>
        <taxon>Euteleostomi</taxon>
        <taxon>Mammalia</taxon>
        <taxon>Eutheria</taxon>
        <taxon>Laurasiatheria</taxon>
        <taxon>Carnivora</taxon>
        <taxon>Caniformia</taxon>
        <taxon>Musteloidea</taxon>
        <taxon>Mustelidae</taxon>
        <taxon>Mustelinae</taxon>
        <taxon>Mustela</taxon>
    </lineage>
</organism>
<feature type="initiator methionine" description="Removed" evidence="2">
    <location>
        <position position="1"/>
    </location>
</feature>
<feature type="chain" id="PRO_0000260358" description="F-actin-capping protein subunit alpha-2">
    <location>
        <begin position="2"/>
        <end position="286"/>
    </location>
</feature>
<feature type="modified residue" description="N-acetylalanine" evidence="2">
    <location>
        <position position="2"/>
    </location>
</feature>
<feature type="modified residue" description="Phosphoserine" evidence="2">
    <location>
        <position position="9"/>
    </location>
</feature>
<accession>Q07E23</accession>
<dbReference type="EMBL" id="DP000183">
    <property type="protein sequence ID" value="ABI93653.1"/>
    <property type="molecule type" value="Genomic_DNA"/>
</dbReference>
<dbReference type="RefSeq" id="XP_004741974.1">
    <property type="nucleotide sequence ID" value="XM_004741917.3"/>
</dbReference>
<dbReference type="SMR" id="Q07E23"/>
<dbReference type="FunCoup" id="Q07E23">
    <property type="interactions" value="126"/>
</dbReference>
<dbReference type="GeneID" id="101675355"/>
<dbReference type="KEGG" id="mpuf:101675355"/>
<dbReference type="CTD" id="830"/>
<dbReference type="InParanoid" id="Q07E23"/>
<dbReference type="OrthoDB" id="340550at2759"/>
<dbReference type="Proteomes" id="UP000000715">
    <property type="component" value="Unplaced"/>
</dbReference>
<dbReference type="GO" id="GO:0030863">
    <property type="term" value="C:cortical cytoskeleton"/>
    <property type="evidence" value="ECO:0007669"/>
    <property type="project" value="TreeGrafter"/>
</dbReference>
<dbReference type="GO" id="GO:0008290">
    <property type="term" value="C:F-actin capping protein complex"/>
    <property type="evidence" value="ECO:0007669"/>
    <property type="project" value="InterPro"/>
</dbReference>
<dbReference type="GO" id="GO:0051015">
    <property type="term" value="F:actin filament binding"/>
    <property type="evidence" value="ECO:0007669"/>
    <property type="project" value="TreeGrafter"/>
</dbReference>
<dbReference type="GO" id="GO:0030036">
    <property type="term" value="P:actin cytoskeleton organization"/>
    <property type="evidence" value="ECO:0007669"/>
    <property type="project" value="TreeGrafter"/>
</dbReference>
<dbReference type="GO" id="GO:0051016">
    <property type="term" value="P:barbed-end actin filament capping"/>
    <property type="evidence" value="ECO:0007669"/>
    <property type="project" value="InterPro"/>
</dbReference>
<dbReference type="FunFam" id="3.30.1140.60:FF:000001">
    <property type="entry name" value="F-actin-capping protein subunit alpha"/>
    <property type="match status" value="1"/>
</dbReference>
<dbReference type="FunFam" id="3.90.1150.210:FF:000002">
    <property type="entry name" value="F-actin-capping protein subunit alpha"/>
    <property type="match status" value="1"/>
</dbReference>
<dbReference type="Gene3D" id="3.30.1140.60">
    <property type="entry name" value="F-actin capping protein, alpha subunit"/>
    <property type="match status" value="1"/>
</dbReference>
<dbReference type="Gene3D" id="3.90.1150.210">
    <property type="entry name" value="F-actin capping protein, beta subunit"/>
    <property type="match status" value="1"/>
</dbReference>
<dbReference type="InterPro" id="IPR002189">
    <property type="entry name" value="CapZ_alpha"/>
</dbReference>
<dbReference type="InterPro" id="IPR037282">
    <property type="entry name" value="CapZ_alpha/beta"/>
</dbReference>
<dbReference type="InterPro" id="IPR042276">
    <property type="entry name" value="CapZ_alpha/beta_2"/>
</dbReference>
<dbReference type="InterPro" id="IPR042489">
    <property type="entry name" value="CapZ_alpha_1"/>
</dbReference>
<dbReference type="InterPro" id="IPR017865">
    <property type="entry name" value="F-actin_cap_asu_CS"/>
</dbReference>
<dbReference type="PANTHER" id="PTHR10653">
    <property type="entry name" value="F-ACTIN-CAPPING PROTEIN SUBUNIT ALPHA"/>
    <property type="match status" value="1"/>
</dbReference>
<dbReference type="PANTHER" id="PTHR10653:SF2">
    <property type="entry name" value="F-ACTIN-CAPPING PROTEIN SUBUNIT ALPHA-2"/>
    <property type="match status" value="1"/>
</dbReference>
<dbReference type="Pfam" id="PF01267">
    <property type="entry name" value="F-actin_cap_A"/>
    <property type="match status" value="1"/>
</dbReference>
<dbReference type="PRINTS" id="PR00191">
    <property type="entry name" value="FACTINCAPA"/>
</dbReference>
<dbReference type="SUPFAM" id="SSF90096">
    <property type="entry name" value="Subunits of heterodimeric actin filament capping protein Capz"/>
    <property type="match status" value="1"/>
</dbReference>
<dbReference type="PROSITE" id="PS00748">
    <property type="entry name" value="F_ACTIN_CAPPING_A_1"/>
    <property type="match status" value="1"/>
</dbReference>
<dbReference type="PROSITE" id="PS00749">
    <property type="entry name" value="F_ACTIN_CAPPING_A_2"/>
    <property type="match status" value="1"/>
</dbReference>